<protein>
    <recommendedName>
        <fullName evidence="1">Threonine--tRNA ligase</fullName>
        <ecNumber evidence="1">6.1.1.3</ecNumber>
    </recommendedName>
    <alternativeName>
        <fullName evidence="1">Threonyl-tRNA synthetase</fullName>
        <shortName evidence="1">ThrRS</shortName>
    </alternativeName>
</protein>
<gene>
    <name evidence="1" type="primary">thrS</name>
    <name type="ordered locus">PH0699</name>
</gene>
<keyword id="KW-0030">Aminoacyl-tRNA synthetase</keyword>
<keyword id="KW-0067">ATP-binding</keyword>
<keyword id="KW-0963">Cytoplasm</keyword>
<keyword id="KW-0436">Ligase</keyword>
<keyword id="KW-0479">Metal-binding</keyword>
<keyword id="KW-0547">Nucleotide-binding</keyword>
<keyword id="KW-0648">Protein biosynthesis</keyword>
<keyword id="KW-0694">RNA-binding</keyword>
<keyword id="KW-0820">tRNA-binding</keyword>
<keyword id="KW-0862">Zinc</keyword>
<comment type="function">
    <text evidence="1">Catalyzes the attachment of threonine to tRNA(Thr) in a two-step reaction: L-threonine is first activated by ATP to form Thr-AMP and then transferred to the acceptor end of tRNA(Thr). Also edits incorrectly charged L-seryl-tRNA(Thr).</text>
</comment>
<comment type="catalytic activity">
    <reaction evidence="1">
        <text>tRNA(Thr) + L-threonine + ATP = L-threonyl-tRNA(Thr) + AMP + diphosphate + H(+)</text>
        <dbReference type="Rhea" id="RHEA:24624"/>
        <dbReference type="Rhea" id="RHEA-COMP:9670"/>
        <dbReference type="Rhea" id="RHEA-COMP:9704"/>
        <dbReference type="ChEBI" id="CHEBI:15378"/>
        <dbReference type="ChEBI" id="CHEBI:30616"/>
        <dbReference type="ChEBI" id="CHEBI:33019"/>
        <dbReference type="ChEBI" id="CHEBI:57926"/>
        <dbReference type="ChEBI" id="CHEBI:78442"/>
        <dbReference type="ChEBI" id="CHEBI:78534"/>
        <dbReference type="ChEBI" id="CHEBI:456215"/>
        <dbReference type="EC" id="6.1.1.3"/>
    </reaction>
</comment>
<comment type="cofactor">
    <cofactor evidence="1">
        <name>Zn(2+)</name>
        <dbReference type="ChEBI" id="CHEBI:29105"/>
    </cofactor>
    <text evidence="1">Binds 1 zinc ion per subunit.</text>
</comment>
<comment type="subunit">
    <text evidence="1">Homodimer.</text>
</comment>
<comment type="subcellular location">
    <subcellularLocation>
        <location evidence="1">Cytoplasm</location>
    </subcellularLocation>
</comment>
<comment type="domain">
    <text evidence="1">The N-terminal domain is an archaea-specific tRNA-editing domain that hydrolyzes incorrectly charged L-seryl-tRNA(Thr). Catalysis of tRNA editing is performed by the charged tRNA itself.</text>
</comment>
<comment type="similarity">
    <text evidence="1">Belongs to the class-II aminoacyl-tRNA synthetase family.</text>
</comment>
<dbReference type="EC" id="6.1.1.3" evidence="1"/>
<dbReference type="EMBL" id="BA000001">
    <property type="protein sequence ID" value="BAA29790.1"/>
    <property type="molecule type" value="Genomic_DNA"/>
</dbReference>
<dbReference type="PIR" id="D71116">
    <property type="entry name" value="D71116"/>
</dbReference>
<dbReference type="RefSeq" id="WP_010884794.1">
    <property type="nucleotide sequence ID" value="NC_000961.1"/>
</dbReference>
<dbReference type="SMR" id="O58430"/>
<dbReference type="STRING" id="70601.gene:9377646"/>
<dbReference type="EnsemblBacteria" id="BAA29790">
    <property type="protein sequence ID" value="BAA29790"/>
    <property type="gene ID" value="BAA29790"/>
</dbReference>
<dbReference type="GeneID" id="1443029"/>
<dbReference type="KEGG" id="pho:PH0699"/>
<dbReference type="eggNOG" id="arCOG00401">
    <property type="taxonomic scope" value="Archaea"/>
</dbReference>
<dbReference type="OrthoDB" id="372136at2157"/>
<dbReference type="Proteomes" id="UP000000752">
    <property type="component" value="Chromosome"/>
</dbReference>
<dbReference type="GO" id="GO:0005737">
    <property type="term" value="C:cytoplasm"/>
    <property type="evidence" value="ECO:0007669"/>
    <property type="project" value="UniProtKB-SubCell"/>
</dbReference>
<dbReference type="GO" id="GO:0005524">
    <property type="term" value="F:ATP binding"/>
    <property type="evidence" value="ECO:0007669"/>
    <property type="project" value="UniProtKB-UniRule"/>
</dbReference>
<dbReference type="GO" id="GO:0004829">
    <property type="term" value="F:threonine-tRNA ligase activity"/>
    <property type="evidence" value="ECO:0007669"/>
    <property type="project" value="UniProtKB-UniRule"/>
</dbReference>
<dbReference type="GO" id="GO:0000049">
    <property type="term" value="F:tRNA binding"/>
    <property type="evidence" value="ECO:0007669"/>
    <property type="project" value="UniProtKB-KW"/>
</dbReference>
<dbReference type="GO" id="GO:0008270">
    <property type="term" value="F:zinc ion binding"/>
    <property type="evidence" value="ECO:0007669"/>
    <property type="project" value="InterPro"/>
</dbReference>
<dbReference type="GO" id="GO:0006435">
    <property type="term" value="P:threonyl-tRNA aminoacylation"/>
    <property type="evidence" value="ECO:0007669"/>
    <property type="project" value="UniProtKB-UniRule"/>
</dbReference>
<dbReference type="CDD" id="cd00860">
    <property type="entry name" value="ThrRS_anticodon"/>
    <property type="match status" value="1"/>
</dbReference>
<dbReference type="FunFam" id="3.30.930.10:FF:000076">
    <property type="entry name" value="Threonine--tRNA ligase"/>
    <property type="match status" value="1"/>
</dbReference>
<dbReference type="FunFam" id="3.40.50.800:FF:000001">
    <property type="entry name" value="Threonine--tRNA ligase"/>
    <property type="match status" value="1"/>
</dbReference>
<dbReference type="FunFam" id="3.50.80.10:FF:000004">
    <property type="entry name" value="Threonine--tRNA ligase"/>
    <property type="match status" value="1"/>
</dbReference>
<dbReference type="Gene3D" id="3.40.50.800">
    <property type="entry name" value="Anticodon-binding domain"/>
    <property type="match status" value="1"/>
</dbReference>
<dbReference type="Gene3D" id="3.30.930.10">
    <property type="entry name" value="Bira Bifunctional Protein, Domain 2"/>
    <property type="match status" value="1"/>
</dbReference>
<dbReference type="Gene3D" id="3.50.80.10">
    <property type="entry name" value="D-tyrosyl-tRNA(Tyr) deacylase"/>
    <property type="match status" value="1"/>
</dbReference>
<dbReference type="HAMAP" id="MF_00184">
    <property type="entry name" value="Thr_tRNA_synth"/>
    <property type="match status" value="1"/>
</dbReference>
<dbReference type="InterPro" id="IPR002314">
    <property type="entry name" value="aa-tRNA-synt_IIb"/>
</dbReference>
<dbReference type="InterPro" id="IPR006195">
    <property type="entry name" value="aa-tRNA-synth_II"/>
</dbReference>
<dbReference type="InterPro" id="IPR045864">
    <property type="entry name" value="aa-tRNA-synth_II/BPL/LPL"/>
</dbReference>
<dbReference type="InterPro" id="IPR004154">
    <property type="entry name" value="Anticodon-bd"/>
</dbReference>
<dbReference type="InterPro" id="IPR036621">
    <property type="entry name" value="Anticodon-bd_dom_sf"/>
</dbReference>
<dbReference type="InterPro" id="IPR023509">
    <property type="entry name" value="DTD-like_sf"/>
</dbReference>
<dbReference type="InterPro" id="IPR002320">
    <property type="entry name" value="Thr-tRNA-ligase_IIa"/>
</dbReference>
<dbReference type="InterPro" id="IPR015011">
    <property type="entry name" value="Threonyl-tRNA_syn_edit_dom_arc"/>
</dbReference>
<dbReference type="InterPro" id="IPR047246">
    <property type="entry name" value="ThrRS_anticodon"/>
</dbReference>
<dbReference type="NCBIfam" id="NF003068">
    <property type="entry name" value="PRK03991.1"/>
    <property type="match status" value="1"/>
</dbReference>
<dbReference type="NCBIfam" id="TIGR00418">
    <property type="entry name" value="thrS"/>
    <property type="match status" value="1"/>
</dbReference>
<dbReference type="PANTHER" id="PTHR11451:SF44">
    <property type="entry name" value="THREONINE--TRNA LIGASE, CHLOROPLASTIC_MITOCHONDRIAL 2"/>
    <property type="match status" value="1"/>
</dbReference>
<dbReference type="PANTHER" id="PTHR11451">
    <property type="entry name" value="THREONINE-TRNA LIGASE"/>
    <property type="match status" value="1"/>
</dbReference>
<dbReference type="Pfam" id="PF03129">
    <property type="entry name" value="HGTP_anticodon"/>
    <property type="match status" value="1"/>
</dbReference>
<dbReference type="Pfam" id="PF00587">
    <property type="entry name" value="tRNA-synt_2b"/>
    <property type="match status" value="1"/>
</dbReference>
<dbReference type="Pfam" id="PF08915">
    <property type="entry name" value="tRNA-Thr_ED"/>
    <property type="match status" value="1"/>
</dbReference>
<dbReference type="PRINTS" id="PR01047">
    <property type="entry name" value="TRNASYNTHTHR"/>
</dbReference>
<dbReference type="SUPFAM" id="SSF52954">
    <property type="entry name" value="Class II aaRS ABD-related"/>
    <property type="match status" value="1"/>
</dbReference>
<dbReference type="SUPFAM" id="SSF55681">
    <property type="entry name" value="Class II aaRS and biotin synthetases"/>
    <property type="match status" value="1"/>
</dbReference>
<dbReference type="PROSITE" id="PS50862">
    <property type="entry name" value="AA_TRNA_LIGASE_II"/>
    <property type="match status" value="1"/>
</dbReference>
<proteinExistence type="inferred from homology"/>
<organism>
    <name type="scientific">Pyrococcus horikoshii (strain ATCC 700860 / DSM 12428 / JCM 9974 / NBRC 100139 / OT-3)</name>
    <dbReference type="NCBI Taxonomy" id="70601"/>
    <lineage>
        <taxon>Archaea</taxon>
        <taxon>Methanobacteriati</taxon>
        <taxon>Methanobacteriota</taxon>
        <taxon>Thermococci</taxon>
        <taxon>Thermococcales</taxon>
        <taxon>Thermococcaceae</taxon>
        <taxon>Pyrococcus</taxon>
    </lineage>
</organism>
<sequence length="625" mass="73023">MRILLIHSDYIEYEVKDKAIKNPEPISEEEKKGRMDEVLVAFISVEKVDETNPEEVVSKAVEEIINVASQVKAENVFVYPFAHLSSELAKPSVAQEILRKVYEGLKEKGYNVGKAPFGYYKAFKISCKGHPLAELSRTIIPEGAKEEEVPEALKKEETELVSYWYILTPEGELIEVDKFDFTGYENLRKFANYEISKSRIAEKEPPHVKLMLEHELVDYEPGSDPGNLRYYPKGRLIKSLLEQYVTEKVIEYGAMEVETPVMYDFEHPALEKYLNRFPARQYIVLSGDKKYFLRFAACFGQFLISKDAVISYRHLPLRMYELTRYSFRREKRGELSGLRRLRAFTMPDMHTLAKDLEQAKDEFKKQFKLSMEVLKGVGLTPEDYEVAIRFTEDFWKENRDFIVELVKIIGKPVLIEMWKQRFFYFILKFEFNFVDNLDKAAALSTVQIDVENAERFGIKYYDENGEEKYPLILHCSPSGAIERVMYAILEKQAKLMQEGKKPMLPLWLSPIQVRVIPVSEEYLDYALYIAGKLEGARIRVDVDDEDERLNKKIRRAEKEWIPYIVVVGAKEKESGTITVRRREDGKQYETRLEELIKEIKEKVEGFPYKPRPLPLLLSKRPKFRG</sequence>
<evidence type="ECO:0000255" key="1">
    <source>
        <dbReference type="HAMAP-Rule" id="MF_00184"/>
    </source>
</evidence>
<name>SYT_PYRHO</name>
<accession>O58430</accession>
<reference key="1">
    <citation type="journal article" date="1998" name="DNA Res.">
        <title>Complete sequence and gene organization of the genome of a hyper-thermophilic archaebacterium, Pyrococcus horikoshii OT3.</title>
        <authorList>
            <person name="Kawarabayasi Y."/>
            <person name="Sawada M."/>
            <person name="Horikawa H."/>
            <person name="Haikawa Y."/>
            <person name="Hino Y."/>
            <person name="Yamamoto S."/>
            <person name="Sekine M."/>
            <person name="Baba S."/>
            <person name="Kosugi H."/>
            <person name="Hosoyama A."/>
            <person name="Nagai Y."/>
            <person name="Sakai M."/>
            <person name="Ogura K."/>
            <person name="Otsuka R."/>
            <person name="Nakazawa H."/>
            <person name="Takamiya M."/>
            <person name="Ohfuku Y."/>
            <person name="Funahashi T."/>
            <person name="Tanaka T."/>
            <person name="Kudoh Y."/>
            <person name="Yamazaki J."/>
            <person name="Kushida N."/>
            <person name="Oguchi A."/>
            <person name="Aoki K."/>
            <person name="Yoshizawa T."/>
            <person name="Nakamura Y."/>
            <person name="Robb F.T."/>
            <person name="Horikoshi K."/>
            <person name="Masuchi Y."/>
            <person name="Shizuya H."/>
            <person name="Kikuchi H."/>
        </authorList>
    </citation>
    <scope>NUCLEOTIDE SEQUENCE [LARGE SCALE GENOMIC DNA]</scope>
    <source>
        <strain>ATCC 700860 / DSM 12428 / JCM 9974 / NBRC 100139 / OT-3</strain>
    </source>
</reference>
<feature type="chain" id="PRO_0000101110" description="Threonine--tRNA ligase">
    <location>
        <begin position="1"/>
        <end position="625"/>
    </location>
</feature>
<feature type="region of interest" description="Editing domain" evidence="1">
    <location>
        <begin position="1"/>
        <end position="143"/>
    </location>
</feature>
<feature type="region of interest" description="Catalytic" evidence="1">
    <location>
        <begin position="206"/>
        <end position="505"/>
    </location>
</feature>
<feature type="binding site" evidence="1">
    <location>
        <position position="298"/>
    </location>
    <ligand>
        <name>Zn(2+)</name>
        <dbReference type="ChEBI" id="CHEBI:29105"/>
    </ligand>
</feature>
<feature type="binding site" evidence="1">
    <location>
        <position position="350"/>
    </location>
    <ligand>
        <name>Zn(2+)</name>
        <dbReference type="ChEBI" id="CHEBI:29105"/>
    </ligand>
</feature>
<feature type="binding site" evidence="1">
    <location>
        <position position="474"/>
    </location>
    <ligand>
        <name>Zn(2+)</name>
        <dbReference type="ChEBI" id="CHEBI:29105"/>
    </ligand>
</feature>